<evidence type="ECO:0000255" key="1">
    <source>
        <dbReference type="HAMAP-Rule" id="MF_00446"/>
    </source>
</evidence>
<organism>
    <name type="scientific">Ralstonia nicotianae (strain ATCC BAA-1114 / GMI1000)</name>
    <name type="common">Ralstonia solanacearum</name>
    <dbReference type="NCBI Taxonomy" id="267608"/>
    <lineage>
        <taxon>Bacteria</taxon>
        <taxon>Pseudomonadati</taxon>
        <taxon>Pseudomonadota</taxon>
        <taxon>Betaproteobacteria</taxon>
        <taxon>Burkholderiales</taxon>
        <taxon>Burkholderiaceae</taxon>
        <taxon>Ralstonia</taxon>
        <taxon>Ralstonia solanacearum species complex</taxon>
    </lineage>
</organism>
<sequence>MQRNMLRAKLHRATVTQADLDYEGSCGIDEDLLDAADMREYEKIELYNVNNGERFSTYIIKGKRGSGEISLNGAAARRAHVGDKLIICTYAPMNEEEVANYKPKIVLLGDGNRIKEIKAV</sequence>
<feature type="chain" id="PRO_0000023141" description="Aspartate 1-decarboxylase beta chain" evidence="1">
    <location>
        <begin position="1"/>
        <end position="24"/>
    </location>
</feature>
<feature type="chain" id="PRO_0000023142" description="Aspartate 1-decarboxylase alpha chain" evidence="1">
    <location>
        <begin position="25"/>
        <end position="120"/>
    </location>
</feature>
<feature type="active site" description="Schiff-base intermediate with substrate; via pyruvic acid" evidence="1">
    <location>
        <position position="25"/>
    </location>
</feature>
<feature type="active site" description="Proton donor" evidence="1">
    <location>
        <position position="58"/>
    </location>
</feature>
<feature type="binding site" evidence="1">
    <location>
        <position position="57"/>
    </location>
    <ligand>
        <name>substrate</name>
    </ligand>
</feature>
<feature type="binding site" evidence="1">
    <location>
        <begin position="73"/>
        <end position="75"/>
    </location>
    <ligand>
        <name>substrate</name>
    </ligand>
</feature>
<feature type="modified residue" description="Pyruvic acid (Ser)" evidence="1">
    <location>
        <position position="25"/>
    </location>
</feature>
<reference key="1">
    <citation type="journal article" date="2002" name="Nature">
        <title>Genome sequence of the plant pathogen Ralstonia solanacearum.</title>
        <authorList>
            <person name="Salanoubat M."/>
            <person name="Genin S."/>
            <person name="Artiguenave F."/>
            <person name="Gouzy J."/>
            <person name="Mangenot S."/>
            <person name="Arlat M."/>
            <person name="Billault A."/>
            <person name="Brottier P."/>
            <person name="Camus J.-C."/>
            <person name="Cattolico L."/>
            <person name="Chandler M."/>
            <person name="Choisne N."/>
            <person name="Claudel-Renard C."/>
            <person name="Cunnac S."/>
            <person name="Demange N."/>
            <person name="Gaspin C."/>
            <person name="Lavie M."/>
            <person name="Moisan A."/>
            <person name="Robert C."/>
            <person name="Saurin W."/>
            <person name="Schiex T."/>
            <person name="Siguier P."/>
            <person name="Thebault P."/>
            <person name="Whalen M."/>
            <person name="Wincker P."/>
            <person name="Levy M."/>
            <person name="Weissenbach J."/>
            <person name="Boucher C.A."/>
        </authorList>
    </citation>
    <scope>NUCLEOTIDE SEQUENCE [LARGE SCALE GENOMIC DNA]</scope>
    <source>
        <strain>ATCC BAA-1114 / GMI1000</strain>
    </source>
</reference>
<keyword id="KW-0068">Autocatalytic cleavage</keyword>
<keyword id="KW-0963">Cytoplasm</keyword>
<keyword id="KW-0210">Decarboxylase</keyword>
<keyword id="KW-0456">Lyase</keyword>
<keyword id="KW-0566">Pantothenate biosynthesis</keyword>
<keyword id="KW-0670">Pyruvate</keyword>
<keyword id="KW-1185">Reference proteome</keyword>
<keyword id="KW-0704">Schiff base</keyword>
<keyword id="KW-0865">Zymogen</keyword>
<dbReference type="EC" id="4.1.1.11" evidence="1"/>
<dbReference type="EMBL" id="AL646052">
    <property type="protein sequence ID" value="CAD16438.1"/>
    <property type="molecule type" value="Genomic_DNA"/>
</dbReference>
<dbReference type="RefSeq" id="WP_011002638.1">
    <property type="nucleotide sequence ID" value="NC_003295.1"/>
</dbReference>
<dbReference type="SMR" id="Q8XVU6"/>
<dbReference type="STRING" id="267608.RSc2731"/>
<dbReference type="EnsemblBacteria" id="CAD16438">
    <property type="protein sequence ID" value="CAD16438"/>
    <property type="gene ID" value="RSc2731"/>
</dbReference>
<dbReference type="GeneID" id="93851491"/>
<dbReference type="KEGG" id="rso:RSc2731"/>
<dbReference type="eggNOG" id="COG0853">
    <property type="taxonomic scope" value="Bacteria"/>
</dbReference>
<dbReference type="HOGENOM" id="CLU_115305_2_1_4"/>
<dbReference type="BRENDA" id="4.1.1.11">
    <property type="organism ID" value="5176"/>
</dbReference>
<dbReference type="UniPathway" id="UPA00028">
    <property type="reaction ID" value="UER00002"/>
</dbReference>
<dbReference type="Proteomes" id="UP000001436">
    <property type="component" value="Chromosome"/>
</dbReference>
<dbReference type="GO" id="GO:0005829">
    <property type="term" value="C:cytosol"/>
    <property type="evidence" value="ECO:0007669"/>
    <property type="project" value="TreeGrafter"/>
</dbReference>
<dbReference type="GO" id="GO:0004068">
    <property type="term" value="F:aspartate 1-decarboxylase activity"/>
    <property type="evidence" value="ECO:0007669"/>
    <property type="project" value="UniProtKB-UniRule"/>
</dbReference>
<dbReference type="GO" id="GO:0006523">
    <property type="term" value="P:alanine biosynthetic process"/>
    <property type="evidence" value="ECO:0007669"/>
    <property type="project" value="InterPro"/>
</dbReference>
<dbReference type="GO" id="GO:0015940">
    <property type="term" value="P:pantothenate biosynthetic process"/>
    <property type="evidence" value="ECO:0007669"/>
    <property type="project" value="UniProtKB-UniRule"/>
</dbReference>
<dbReference type="CDD" id="cd06919">
    <property type="entry name" value="Asp_decarbox"/>
    <property type="match status" value="1"/>
</dbReference>
<dbReference type="Gene3D" id="2.40.40.20">
    <property type="match status" value="1"/>
</dbReference>
<dbReference type="HAMAP" id="MF_00446">
    <property type="entry name" value="PanD"/>
    <property type="match status" value="1"/>
</dbReference>
<dbReference type="InterPro" id="IPR009010">
    <property type="entry name" value="Asp_de-COase-like_dom_sf"/>
</dbReference>
<dbReference type="InterPro" id="IPR003190">
    <property type="entry name" value="Asp_decarbox"/>
</dbReference>
<dbReference type="NCBIfam" id="TIGR00223">
    <property type="entry name" value="panD"/>
    <property type="match status" value="1"/>
</dbReference>
<dbReference type="PANTHER" id="PTHR21012">
    <property type="entry name" value="ASPARTATE 1-DECARBOXYLASE"/>
    <property type="match status" value="1"/>
</dbReference>
<dbReference type="PANTHER" id="PTHR21012:SF0">
    <property type="entry name" value="ASPARTATE 1-DECARBOXYLASE"/>
    <property type="match status" value="1"/>
</dbReference>
<dbReference type="Pfam" id="PF02261">
    <property type="entry name" value="Asp_decarbox"/>
    <property type="match status" value="1"/>
</dbReference>
<dbReference type="PIRSF" id="PIRSF006246">
    <property type="entry name" value="Asp_decarbox"/>
    <property type="match status" value="1"/>
</dbReference>
<dbReference type="SUPFAM" id="SSF50692">
    <property type="entry name" value="ADC-like"/>
    <property type="match status" value="1"/>
</dbReference>
<protein>
    <recommendedName>
        <fullName evidence="1">Aspartate 1-decarboxylase</fullName>
        <ecNumber evidence="1">4.1.1.11</ecNumber>
    </recommendedName>
    <alternativeName>
        <fullName evidence="1">Aspartate alpha-decarboxylase</fullName>
    </alternativeName>
    <component>
        <recommendedName>
            <fullName evidence="1">Aspartate 1-decarboxylase beta chain</fullName>
        </recommendedName>
    </component>
    <component>
        <recommendedName>
            <fullName evidence="1">Aspartate 1-decarboxylase alpha chain</fullName>
        </recommendedName>
    </component>
</protein>
<gene>
    <name evidence="1" type="primary">panD</name>
    <name type="ordered locus">RSc2731</name>
    <name type="ORF">RS00123</name>
</gene>
<name>PAND_RALN1</name>
<proteinExistence type="inferred from homology"/>
<comment type="function">
    <text evidence="1">Catalyzes the pyruvoyl-dependent decarboxylation of aspartate to produce beta-alanine.</text>
</comment>
<comment type="catalytic activity">
    <reaction evidence="1">
        <text>L-aspartate + H(+) = beta-alanine + CO2</text>
        <dbReference type="Rhea" id="RHEA:19497"/>
        <dbReference type="ChEBI" id="CHEBI:15378"/>
        <dbReference type="ChEBI" id="CHEBI:16526"/>
        <dbReference type="ChEBI" id="CHEBI:29991"/>
        <dbReference type="ChEBI" id="CHEBI:57966"/>
        <dbReference type="EC" id="4.1.1.11"/>
    </reaction>
</comment>
<comment type="cofactor">
    <cofactor evidence="1">
        <name>pyruvate</name>
        <dbReference type="ChEBI" id="CHEBI:15361"/>
    </cofactor>
    <text evidence="1">Binds 1 pyruvoyl group covalently per subunit.</text>
</comment>
<comment type="pathway">
    <text evidence="1">Cofactor biosynthesis; (R)-pantothenate biosynthesis; beta-alanine from L-aspartate: step 1/1.</text>
</comment>
<comment type="subunit">
    <text evidence="1">Heterooctamer of four alpha and four beta subunits.</text>
</comment>
<comment type="subcellular location">
    <subcellularLocation>
        <location evidence="1">Cytoplasm</location>
    </subcellularLocation>
</comment>
<comment type="PTM">
    <text evidence="1">Is synthesized initially as an inactive proenzyme, which is activated by self-cleavage at a specific serine bond to produce a beta-subunit with a hydroxyl group at its C-terminus and an alpha-subunit with a pyruvoyl group at its N-terminus.</text>
</comment>
<comment type="similarity">
    <text evidence="1">Belongs to the PanD family.</text>
</comment>
<accession>Q8XVU6</accession>